<name>TCP7_ARATH</name>
<feature type="chain" id="PRO_0000330781" description="Transcription factor TCP7">
    <location>
        <begin position="1"/>
        <end position="250"/>
    </location>
</feature>
<feature type="domain" description="TCP" evidence="1">
    <location>
        <begin position="39"/>
        <end position="93"/>
    </location>
</feature>
<feature type="sequence conflict" description="In Ref. 3; BAC43274." evidence="2" ref="3">
    <original>V</original>
    <variation>I</variation>
    <location>
        <position position="33"/>
    </location>
</feature>
<sequence length="250" mass="27061">MSINNNNNNNNNNNDGLMISSNGALIEQQPSVVVKKPPAKDRHSKVDGRGRRIRMPIICAARVFQLTRELGHKSDGQTIEWLLRQAEPSIIAATGTGTTPASFSTASVSIRGATNSTSLDHKPTSLLGGTSPFILGKRVRADEDSNNSHNHSSVGKDETFTTTPAGFWAVPARPDFGQVWSFAGAPQEMFLQQQHHHQQPLFVHQQQQQQAAMGEASAARVGNYLPGHLNLLASLSGGSPGSDRREEDPR</sequence>
<organism>
    <name type="scientific">Arabidopsis thaliana</name>
    <name type="common">Mouse-ear cress</name>
    <dbReference type="NCBI Taxonomy" id="3702"/>
    <lineage>
        <taxon>Eukaryota</taxon>
        <taxon>Viridiplantae</taxon>
        <taxon>Streptophyta</taxon>
        <taxon>Embryophyta</taxon>
        <taxon>Tracheophyta</taxon>
        <taxon>Spermatophyta</taxon>
        <taxon>Magnoliopsida</taxon>
        <taxon>eudicotyledons</taxon>
        <taxon>Gunneridae</taxon>
        <taxon>Pentapetalae</taxon>
        <taxon>rosids</taxon>
        <taxon>malvids</taxon>
        <taxon>Brassicales</taxon>
        <taxon>Brassicaceae</taxon>
        <taxon>Camelineae</taxon>
        <taxon>Arabidopsis</taxon>
    </lineage>
</organism>
<comment type="interaction">
    <interactant intactId="EBI-15192677">
        <id>Q9FMX2</id>
    </interactant>
    <interactant intactId="EBI-1573499">
        <id>Q9LNW3</id>
        <label>AIP1</label>
    </interactant>
    <organismsDiffer>false</organismsDiffer>
    <experiments>4</experiments>
</comment>
<comment type="interaction">
    <interactant intactId="EBI-15192677">
        <id>Q9FMX2</id>
    </interactant>
    <interactant intactId="EBI-15191587">
        <id>F4K1A8</id>
        <label>At5g26749</label>
    </interactant>
    <organismsDiffer>false</organismsDiffer>
    <experiments>3</experiments>
</comment>
<comment type="interaction">
    <interactant intactId="EBI-15192677">
        <id>Q9FMX2</id>
    </interactant>
    <interactant intactId="EBI-4427748">
        <id>Q7XJU2</id>
        <label>BHLH153</label>
    </interactant>
    <organismsDiffer>false</organismsDiffer>
    <experiments>3</experiments>
</comment>
<comment type="interaction">
    <interactant intactId="EBI-15192677">
        <id>Q9FMX2</id>
    </interactant>
    <interactant intactId="EBI-15191571">
        <id>Q4PSE2</id>
        <label>NFYC8</label>
    </interactant>
    <organismsDiffer>false</organismsDiffer>
    <experiments>3</experiments>
</comment>
<comment type="interaction">
    <interactant intactId="EBI-15192677">
        <id>Q9FMX2</id>
    </interactant>
    <interactant intactId="EBI-15193025">
        <id>Q9LXU1</id>
        <label>NOT9B</label>
    </interactant>
    <organismsDiffer>false</organismsDiffer>
    <experiments>3</experiments>
</comment>
<comment type="interaction">
    <interactant intactId="EBI-15192677">
        <id>Q9FMX2</id>
    </interactant>
    <interactant intactId="EBI-25512318">
        <id>O23078</id>
        <label>PLDBETA2</label>
    </interactant>
    <organismsDiffer>false</organismsDiffer>
    <experiments>3</experiments>
</comment>
<comment type="interaction">
    <interactant intactId="EBI-15192677">
        <id>Q9FMX2</id>
    </interactant>
    <interactant intactId="EBI-4426178">
        <id>Q9LT89</id>
        <label>TCP19</label>
    </interactant>
    <organismsDiffer>false</organismsDiffer>
    <experiments>3</experiments>
</comment>
<comment type="interaction">
    <interactant intactId="EBI-15192677">
        <id>Q9FMX2</id>
    </interactant>
    <interactant intactId="EBI-15192297">
        <id>Q9LQF0</id>
        <label>TCP23</label>
    </interactant>
    <organismsDiffer>false</organismsDiffer>
    <experiments>3</experiments>
</comment>
<comment type="interaction">
    <interactant intactId="EBI-15192677">
        <id>Q9FMX2</id>
    </interactant>
    <interactant intactId="EBI-9838721">
        <id>O64647</id>
        <label>TCP9</label>
    </interactant>
    <organismsDiffer>false</organismsDiffer>
    <experiments>4</experiments>
</comment>
<comment type="subcellular location">
    <subcellularLocation>
        <location evidence="2">Nucleus</location>
    </subcellularLocation>
</comment>
<accession>Q9FMX2</accession>
<accession>Q8GWR4</accession>
<proteinExistence type="evidence at protein level"/>
<keyword id="KW-0238">DNA-binding</keyword>
<keyword id="KW-0539">Nucleus</keyword>
<keyword id="KW-1185">Reference proteome</keyword>
<keyword id="KW-0804">Transcription</keyword>
<keyword id="KW-0805">Transcription regulation</keyword>
<evidence type="ECO:0000255" key="1">
    <source>
        <dbReference type="PROSITE-ProRule" id="PRU00701"/>
    </source>
</evidence>
<evidence type="ECO:0000305" key="2"/>
<gene>
    <name type="primary">TCP7</name>
    <name type="ordered locus">At5g23280</name>
    <name type="ORF">MKD15.14</name>
</gene>
<protein>
    <recommendedName>
        <fullName>Transcription factor TCP7</fullName>
    </recommendedName>
</protein>
<reference key="1">
    <citation type="journal article" date="1997" name="DNA Res.">
        <title>Structural analysis of Arabidopsis thaliana chromosome 5. III. Sequence features of the regions of 1,191,918 bp covered by seventeen physically assigned P1 clones.</title>
        <authorList>
            <person name="Nakamura Y."/>
            <person name="Sato S."/>
            <person name="Kaneko T."/>
            <person name="Kotani H."/>
            <person name="Asamizu E."/>
            <person name="Miyajima N."/>
            <person name="Tabata S."/>
        </authorList>
    </citation>
    <scope>NUCLEOTIDE SEQUENCE [LARGE SCALE GENOMIC DNA]</scope>
    <source>
        <strain>cv. Columbia</strain>
    </source>
</reference>
<reference key="2">
    <citation type="journal article" date="2017" name="Plant J.">
        <title>Araport11: a complete reannotation of the Arabidopsis thaliana reference genome.</title>
        <authorList>
            <person name="Cheng C.Y."/>
            <person name="Krishnakumar V."/>
            <person name="Chan A.P."/>
            <person name="Thibaud-Nissen F."/>
            <person name="Schobel S."/>
            <person name="Town C.D."/>
        </authorList>
    </citation>
    <scope>GENOME REANNOTATION</scope>
    <source>
        <strain>cv. Columbia</strain>
    </source>
</reference>
<reference key="3">
    <citation type="journal article" date="2002" name="Science">
        <title>Functional annotation of a full-length Arabidopsis cDNA collection.</title>
        <authorList>
            <person name="Seki M."/>
            <person name="Narusaka M."/>
            <person name="Kamiya A."/>
            <person name="Ishida J."/>
            <person name="Satou M."/>
            <person name="Sakurai T."/>
            <person name="Nakajima M."/>
            <person name="Enju A."/>
            <person name="Akiyama K."/>
            <person name="Oono Y."/>
            <person name="Muramatsu M."/>
            <person name="Hayashizaki Y."/>
            <person name="Kawai J."/>
            <person name="Carninci P."/>
            <person name="Itoh M."/>
            <person name="Ishii Y."/>
            <person name="Arakawa T."/>
            <person name="Shibata K."/>
            <person name="Shinagawa A."/>
            <person name="Shinozaki K."/>
        </authorList>
    </citation>
    <scope>NUCLEOTIDE SEQUENCE [LARGE SCALE MRNA]</scope>
    <source>
        <strain>cv. Columbia</strain>
    </source>
</reference>
<reference key="4">
    <citation type="journal article" date="2007" name="Plant Cell">
        <title>Arabidopsis BRANCHED1 acts as an integrator of branching signals within axillary buds.</title>
        <authorList>
            <person name="Aguilar-Martinez J.A."/>
            <person name="Poza-Carrion C."/>
            <person name="Cubas P."/>
        </authorList>
    </citation>
    <scope>GENE FAMILY</scope>
    <scope>NOMENCLATURE</scope>
</reference>
<dbReference type="EMBL" id="AB007648">
    <property type="protein sequence ID" value="BAB11183.1"/>
    <property type="molecule type" value="Genomic_DNA"/>
</dbReference>
<dbReference type="EMBL" id="CP002688">
    <property type="protein sequence ID" value="AED93147.1"/>
    <property type="molecule type" value="Genomic_DNA"/>
</dbReference>
<dbReference type="EMBL" id="AK118679">
    <property type="protein sequence ID" value="BAC43274.1"/>
    <property type="molecule type" value="mRNA"/>
</dbReference>
<dbReference type="RefSeq" id="NP_197719.1">
    <property type="nucleotide sequence ID" value="NM_122234.3"/>
</dbReference>
<dbReference type="SMR" id="Q9FMX2"/>
<dbReference type="BioGRID" id="17667">
    <property type="interactions" value="115"/>
</dbReference>
<dbReference type="FunCoup" id="Q9FMX2">
    <property type="interactions" value="920"/>
</dbReference>
<dbReference type="IntAct" id="Q9FMX2">
    <property type="interactions" value="117"/>
</dbReference>
<dbReference type="STRING" id="3702.Q9FMX2"/>
<dbReference type="GlyGen" id="Q9FMX2">
    <property type="glycosylation" value="1 site"/>
</dbReference>
<dbReference type="iPTMnet" id="Q9FMX2"/>
<dbReference type="PaxDb" id="3702-AT5G23280.1"/>
<dbReference type="ProteomicsDB" id="234188"/>
<dbReference type="EnsemblPlants" id="AT5G23280.1">
    <property type="protein sequence ID" value="AT5G23280.1"/>
    <property type="gene ID" value="AT5G23280"/>
</dbReference>
<dbReference type="GeneID" id="832392"/>
<dbReference type="Gramene" id="AT5G23280.1">
    <property type="protein sequence ID" value="AT5G23280.1"/>
    <property type="gene ID" value="AT5G23280"/>
</dbReference>
<dbReference type="KEGG" id="ath:AT5G23280"/>
<dbReference type="Araport" id="AT5G23280"/>
<dbReference type="TAIR" id="AT5G23280">
    <property type="gene designation" value="TCP7"/>
</dbReference>
<dbReference type="eggNOG" id="ENOG502QSSR">
    <property type="taxonomic scope" value="Eukaryota"/>
</dbReference>
<dbReference type="HOGENOM" id="CLU_100757_0_0_1"/>
<dbReference type="InParanoid" id="Q9FMX2"/>
<dbReference type="OMA" id="MDPQRHQ"/>
<dbReference type="PhylomeDB" id="Q9FMX2"/>
<dbReference type="PRO" id="PR:Q9FMX2"/>
<dbReference type="Proteomes" id="UP000006548">
    <property type="component" value="Chromosome 5"/>
</dbReference>
<dbReference type="ExpressionAtlas" id="Q9FMX2">
    <property type="expression patterns" value="baseline and differential"/>
</dbReference>
<dbReference type="GO" id="GO:0005634">
    <property type="term" value="C:nucleus"/>
    <property type="evidence" value="ECO:0007669"/>
    <property type="project" value="UniProtKB-SubCell"/>
</dbReference>
<dbReference type="GO" id="GO:0001216">
    <property type="term" value="F:DNA-binding transcription activator activity"/>
    <property type="evidence" value="ECO:0000314"/>
    <property type="project" value="TAIR"/>
</dbReference>
<dbReference type="GO" id="GO:0003700">
    <property type="term" value="F:DNA-binding transcription factor activity"/>
    <property type="evidence" value="ECO:0000250"/>
    <property type="project" value="TAIR"/>
</dbReference>
<dbReference type="GO" id="GO:0043565">
    <property type="term" value="F:sequence-specific DNA binding"/>
    <property type="evidence" value="ECO:0000353"/>
    <property type="project" value="TAIR"/>
</dbReference>
<dbReference type="GO" id="GO:0140537">
    <property type="term" value="F:transcription regulator activator activity"/>
    <property type="evidence" value="ECO:0000353"/>
    <property type="project" value="TAIR"/>
</dbReference>
<dbReference type="GO" id="GO:0048578">
    <property type="term" value="P:positive regulation of long-day photoperiodism, flowering"/>
    <property type="evidence" value="ECO:0000315"/>
    <property type="project" value="TAIR"/>
</dbReference>
<dbReference type="GO" id="GO:0006355">
    <property type="term" value="P:regulation of DNA-templated transcription"/>
    <property type="evidence" value="ECO:0000304"/>
    <property type="project" value="TAIR"/>
</dbReference>
<dbReference type="InterPro" id="IPR017887">
    <property type="entry name" value="TF_TCP_subgr"/>
</dbReference>
<dbReference type="InterPro" id="IPR005333">
    <property type="entry name" value="Transcription_factor_TCP"/>
</dbReference>
<dbReference type="PANTHER" id="PTHR31072:SF239">
    <property type="entry name" value="TRANSCRIPTION FACTOR TCP21-RELATED"/>
    <property type="match status" value="1"/>
</dbReference>
<dbReference type="PANTHER" id="PTHR31072">
    <property type="entry name" value="TRANSCRIPTION FACTOR TCP4-RELATED"/>
    <property type="match status" value="1"/>
</dbReference>
<dbReference type="Pfam" id="PF03634">
    <property type="entry name" value="TCP"/>
    <property type="match status" value="1"/>
</dbReference>
<dbReference type="PROSITE" id="PS51369">
    <property type="entry name" value="TCP"/>
    <property type="match status" value="1"/>
</dbReference>